<organism>
    <name type="scientific">Microtus arvalis</name>
    <name type="common">Common vole</name>
    <name type="synonym">Field vole</name>
    <dbReference type="NCBI Taxonomy" id="47230"/>
    <lineage>
        <taxon>Eukaryota</taxon>
        <taxon>Metazoa</taxon>
        <taxon>Chordata</taxon>
        <taxon>Craniata</taxon>
        <taxon>Vertebrata</taxon>
        <taxon>Euteleostomi</taxon>
        <taxon>Mammalia</taxon>
        <taxon>Eutheria</taxon>
        <taxon>Euarchontoglires</taxon>
        <taxon>Glires</taxon>
        <taxon>Rodentia</taxon>
        <taxon>Myomorpha</taxon>
        <taxon>Muroidea</taxon>
        <taxon>Cricetidae</taxon>
        <taxon>Arvicolinae</taxon>
        <taxon>Microtus</taxon>
    </lineage>
</organism>
<feature type="chain" id="PRO_0000061175" description="Cytochrome b">
    <location>
        <begin position="1"/>
        <end position="380"/>
    </location>
</feature>
<feature type="transmembrane region" description="Helical" evidence="2">
    <location>
        <begin position="33"/>
        <end position="53"/>
    </location>
</feature>
<feature type="transmembrane region" description="Helical" evidence="2">
    <location>
        <begin position="77"/>
        <end position="98"/>
    </location>
</feature>
<feature type="transmembrane region" description="Helical" evidence="2">
    <location>
        <begin position="113"/>
        <end position="133"/>
    </location>
</feature>
<feature type="transmembrane region" description="Helical" evidence="2">
    <location>
        <begin position="178"/>
        <end position="198"/>
    </location>
</feature>
<feature type="transmembrane region" description="Helical" evidence="2">
    <location>
        <begin position="226"/>
        <end position="246"/>
    </location>
</feature>
<feature type="transmembrane region" description="Helical" evidence="2">
    <location>
        <begin position="288"/>
        <end position="308"/>
    </location>
</feature>
<feature type="transmembrane region" description="Helical" evidence="2">
    <location>
        <begin position="320"/>
        <end position="340"/>
    </location>
</feature>
<feature type="transmembrane region" description="Helical" evidence="2">
    <location>
        <begin position="347"/>
        <end position="367"/>
    </location>
</feature>
<feature type="binding site" description="axial binding residue" evidence="2">
    <location>
        <position position="83"/>
    </location>
    <ligand>
        <name>heme</name>
        <dbReference type="ChEBI" id="CHEBI:30413"/>
        <label>b562</label>
    </ligand>
    <ligandPart>
        <name>Fe</name>
        <dbReference type="ChEBI" id="CHEBI:18248"/>
    </ligandPart>
</feature>
<feature type="binding site" description="axial binding residue" evidence="2">
    <location>
        <position position="97"/>
    </location>
    <ligand>
        <name>heme</name>
        <dbReference type="ChEBI" id="CHEBI:30413"/>
        <label>b566</label>
    </ligand>
    <ligandPart>
        <name>Fe</name>
        <dbReference type="ChEBI" id="CHEBI:18248"/>
    </ligandPart>
</feature>
<feature type="binding site" description="axial binding residue" evidence="2">
    <location>
        <position position="182"/>
    </location>
    <ligand>
        <name>heme</name>
        <dbReference type="ChEBI" id="CHEBI:30413"/>
        <label>b562</label>
    </ligand>
    <ligandPart>
        <name>Fe</name>
        <dbReference type="ChEBI" id="CHEBI:18248"/>
    </ligandPart>
</feature>
<feature type="binding site" description="axial binding residue" evidence="2">
    <location>
        <position position="196"/>
    </location>
    <ligand>
        <name>heme</name>
        <dbReference type="ChEBI" id="CHEBI:30413"/>
        <label>b566</label>
    </ligand>
    <ligandPart>
        <name>Fe</name>
        <dbReference type="ChEBI" id="CHEBI:18248"/>
    </ligandPart>
</feature>
<feature type="binding site" evidence="2">
    <location>
        <position position="201"/>
    </location>
    <ligand>
        <name>a ubiquinone</name>
        <dbReference type="ChEBI" id="CHEBI:16389"/>
    </ligand>
</feature>
<feature type="sequence variant" description="In strain: Isolate TK 44636.">
    <original>F</original>
    <variation>V</variation>
    <location>
        <position position="303"/>
    </location>
</feature>
<keyword id="KW-0249">Electron transport</keyword>
<keyword id="KW-0349">Heme</keyword>
<keyword id="KW-0408">Iron</keyword>
<keyword id="KW-0472">Membrane</keyword>
<keyword id="KW-0479">Metal-binding</keyword>
<keyword id="KW-0496">Mitochondrion</keyword>
<keyword id="KW-0999">Mitochondrion inner membrane</keyword>
<keyword id="KW-0679">Respiratory chain</keyword>
<keyword id="KW-0812">Transmembrane</keyword>
<keyword id="KW-1133">Transmembrane helix</keyword>
<keyword id="KW-0813">Transport</keyword>
<keyword id="KW-0830">Ubiquinone</keyword>
<accession>Q36922</accession>
<accession>B6HYB0</accession>
<accession>Q34963</accession>
<accession>Q34964</accession>
<accession>Q34965</accession>
<accession>Q34966</accession>
<accession>Q34967</accession>
<accession>Q34968</accession>
<accession>Q37039</accession>
<accession>Q85B03</accession>
<gene>
    <name type="primary">MT-CYB</name>
    <name type="synonym">COB</name>
    <name type="synonym">CYTB</name>
    <name type="synonym">MTCYB</name>
</gene>
<dbReference type="EMBL" id="AM991042">
    <property type="protein sequence ID" value="CAQ51171.1"/>
    <property type="molecule type" value="Genomic_DNA"/>
</dbReference>
<dbReference type="EMBL" id="AM991095">
    <property type="protein sequence ID" value="CAQ51224.1"/>
    <property type="molecule type" value="Genomic_DNA"/>
</dbReference>
<dbReference type="EMBL" id="AM991096">
    <property type="protein sequence ID" value="CAQ51225.1"/>
    <property type="molecule type" value="Genomic_DNA"/>
</dbReference>
<dbReference type="EMBL" id="AF190257">
    <property type="protein sequence ID" value="AAO21480.1"/>
    <property type="molecule type" value="Genomic_DNA"/>
</dbReference>
<dbReference type="EMBL" id="AF190258">
    <property type="protein sequence ID" value="AAO21481.1"/>
    <property type="molecule type" value="Genomic_DNA"/>
</dbReference>
<dbReference type="EMBL" id="AF190259">
    <property type="protein sequence ID" value="AAO21482.1"/>
    <property type="molecule type" value="Genomic_DNA"/>
</dbReference>
<dbReference type="EMBL" id="AF190260">
    <property type="protein sequence ID" value="AAO21483.1"/>
    <property type="molecule type" value="Genomic_DNA"/>
</dbReference>
<dbReference type="EMBL" id="AF190261">
    <property type="protein sequence ID" value="AAO21484.1"/>
    <property type="molecule type" value="Genomic_DNA"/>
</dbReference>
<dbReference type="EMBL" id="AF190262">
    <property type="protein sequence ID" value="AAO21485.1"/>
    <property type="molecule type" value="Genomic_DNA"/>
</dbReference>
<dbReference type="EMBL" id="AF190263">
    <property type="protein sequence ID" value="AAO21486.1"/>
    <property type="molecule type" value="Genomic_DNA"/>
</dbReference>
<dbReference type="EMBL" id="AF190264">
    <property type="protein sequence ID" value="AAO21487.1"/>
    <property type="molecule type" value="Genomic_DNA"/>
</dbReference>
<dbReference type="EMBL" id="AF190265">
    <property type="protein sequence ID" value="AAO21488.1"/>
    <property type="molecule type" value="Genomic_DNA"/>
</dbReference>
<dbReference type="EMBL" id="AF190266">
    <property type="protein sequence ID" value="AAO21489.1"/>
    <property type="molecule type" value="Genomic_DNA"/>
</dbReference>
<dbReference type="EMBL" id="AF190267">
    <property type="protein sequence ID" value="AAO21490.1"/>
    <property type="molecule type" value="Genomic_DNA"/>
</dbReference>
<dbReference type="EMBL" id="AF190268">
    <property type="protein sequence ID" value="AAO21491.1"/>
    <property type="molecule type" value="Genomic_DNA"/>
</dbReference>
<dbReference type="SMR" id="Q36922"/>
<dbReference type="GO" id="GO:0005743">
    <property type="term" value="C:mitochondrial inner membrane"/>
    <property type="evidence" value="ECO:0007669"/>
    <property type="project" value="UniProtKB-SubCell"/>
</dbReference>
<dbReference type="GO" id="GO:0045275">
    <property type="term" value="C:respiratory chain complex III"/>
    <property type="evidence" value="ECO:0007669"/>
    <property type="project" value="InterPro"/>
</dbReference>
<dbReference type="GO" id="GO:0046872">
    <property type="term" value="F:metal ion binding"/>
    <property type="evidence" value="ECO:0007669"/>
    <property type="project" value="UniProtKB-KW"/>
</dbReference>
<dbReference type="GO" id="GO:0008121">
    <property type="term" value="F:ubiquinol-cytochrome-c reductase activity"/>
    <property type="evidence" value="ECO:0007669"/>
    <property type="project" value="InterPro"/>
</dbReference>
<dbReference type="GO" id="GO:0006122">
    <property type="term" value="P:mitochondrial electron transport, ubiquinol to cytochrome c"/>
    <property type="evidence" value="ECO:0007669"/>
    <property type="project" value="TreeGrafter"/>
</dbReference>
<dbReference type="CDD" id="cd00290">
    <property type="entry name" value="cytochrome_b_C"/>
    <property type="match status" value="1"/>
</dbReference>
<dbReference type="CDD" id="cd00284">
    <property type="entry name" value="Cytochrome_b_N"/>
    <property type="match status" value="1"/>
</dbReference>
<dbReference type="FunFam" id="1.20.810.10:FF:000002">
    <property type="entry name" value="Cytochrome b"/>
    <property type="match status" value="1"/>
</dbReference>
<dbReference type="Gene3D" id="1.20.810.10">
    <property type="entry name" value="Cytochrome Bc1 Complex, Chain C"/>
    <property type="match status" value="1"/>
</dbReference>
<dbReference type="InterPro" id="IPR005798">
    <property type="entry name" value="Cyt_b/b6_C"/>
</dbReference>
<dbReference type="InterPro" id="IPR036150">
    <property type="entry name" value="Cyt_b/b6_C_sf"/>
</dbReference>
<dbReference type="InterPro" id="IPR005797">
    <property type="entry name" value="Cyt_b/b6_N"/>
</dbReference>
<dbReference type="InterPro" id="IPR027387">
    <property type="entry name" value="Cytb/b6-like_sf"/>
</dbReference>
<dbReference type="InterPro" id="IPR030689">
    <property type="entry name" value="Cytochrome_b"/>
</dbReference>
<dbReference type="InterPro" id="IPR048260">
    <property type="entry name" value="Cytochrome_b_C_euk/bac"/>
</dbReference>
<dbReference type="InterPro" id="IPR048259">
    <property type="entry name" value="Cytochrome_b_N_euk/bac"/>
</dbReference>
<dbReference type="InterPro" id="IPR016174">
    <property type="entry name" value="Di-haem_cyt_TM"/>
</dbReference>
<dbReference type="PANTHER" id="PTHR19271">
    <property type="entry name" value="CYTOCHROME B"/>
    <property type="match status" value="1"/>
</dbReference>
<dbReference type="PANTHER" id="PTHR19271:SF16">
    <property type="entry name" value="CYTOCHROME B"/>
    <property type="match status" value="1"/>
</dbReference>
<dbReference type="Pfam" id="PF00032">
    <property type="entry name" value="Cytochrom_B_C"/>
    <property type="match status" value="1"/>
</dbReference>
<dbReference type="Pfam" id="PF00033">
    <property type="entry name" value="Cytochrome_B"/>
    <property type="match status" value="1"/>
</dbReference>
<dbReference type="PIRSF" id="PIRSF038885">
    <property type="entry name" value="COB"/>
    <property type="match status" value="1"/>
</dbReference>
<dbReference type="SUPFAM" id="SSF81648">
    <property type="entry name" value="a domain/subunit of cytochrome bc1 complex (Ubiquinol-cytochrome c reductase)"/>
    <property type="match status" value="1"/>
</dbReference>
<dbReference type="SUPFAM" id="SSF81342">
    <property type="entry name" value="Transmembrane di-heme cytochromes"/>
    <property type="match status" value="1"/>
</dbReference>
<dbReference type="PROSITE" id="PS51003">
    <property type="entry name" value="CYTB_CTER"/>
    <property type="match status" value="1"/>
</dbReference>
<dbReference type="PROSITE" id="PS51002">
    <property type="entry name" value="CYTB_NTER"/>
    <property type="match status" value="1"/>
</dbReference>
<evidence type="ECO:0000250" key="1"/>
<evidence type="ECO:0000250" key="2">
    <source>
        <dbReference type="UniProtKB" id="P00157"/>
    </source>
</evidence>
<evidence type="ECO:0000255" key="3">
    <source>
        <dbReference type="PROSITE-ProRule" id="PRU00967"/>
    </source>
</evidence>
<evidence type="ECO:0000255" key="4">
    <source>
        <dbReference type="PROSITE-ProRule" id="PRU00968"/>
    </source>
</evidence>
<evidence type="ECO:0000269" key="5">
    <source>
    </source>
</evidence>
<evidence type="ECO:0000269" key="6">
    <source>
    </source>
</evidence>
<evidence type="ECO:0000312" key="7">
    <source>
        <dbReference type="EMBL" id="CAQ51171.1"/>
    </source>
</evidence>
<comment type="function">
    <text evidence="2">Component of the ubiquinol-cytochrome c reductase complex (complex III or cytochrome b-c1 complex) that is part of the mitochondrial respiratory chain. The b-c1 complex mediates electron transfer from ubiquinol to cytochrome c. Contributes to the generation of a proton gradient across the mitochondrial membrane that is then used for ATP synthesis.</text>
</comment>
<comment type="cofactor">
    <cofactor evidence="2">
        <name>heme</name>
        <dbReference type="ChEBI" id="CHEBI:30413"/>
    </cofactor>
    <text evidence="2">Binds 2 heme groups non-covalently.</text>
</comment>
<comment type="subunit">
    <text evidence="2">The cytochrome bc1 complex contains 11 subunits: 3 respiratory subunits (MT-CYB, CYC1 and UQCRFS1), 2 core proteins (UQCRC1 and UQCRC2) and 6 low-molecular weight proteins (UQCRH/QCR6, UQCRB/QCR7, UQCRQ/QCR8, UQCR10/QCR9, UQCR11/QCR10 and a cleavage product of UQCRFS1). This cytochrome bc1 complex then forms a dimer.</text>
</comment>
<comment type="subcellular location">
    <subcellularLocation>
        <location evidence="2">Mitochondrion inner membrane</location>
        <topology evidence="2">Multi-pass membrane protein</topology>
    </subcellularLocation>
</comment>
<comment type="miscellaneous">
    <text evidence="1">Heme 1 (or BL or b562) is low-potential and absorbs at about 562 nm, and heme 2 (or BH or b566) is high-potential and absorbs at about 566 nm.</text>
</comment>
<comment type="similarity">
    <text evidence="3 4">Belongs to the cytochrome b family.</text>
</comment>
<comment type="caution">
    <text evidence="2">The full-length protein contains only eight transmembrane helices, not nine as predicted by bioinformatics tools.</text>
</comment>
<comment type="caution">
    <text evidence="5 6">A number of sequences were reported to show high variation indicative of high levels of genetic change in Chernobyl rodents (PubMed:8614463). However, this work was later retracted although the nucleotide sequences are still available (PubMed:9363899).</text>
</comment>
<reference evidence="7" key="1">
    <citation type="journal article" date="2008" name="PLoS ONE">
        <title>Phylogeography of the common vole, Microtus arvalis: inference from molecular and fossil data.</title>
        <authorList>
            <person name="Tougard C."/>
            <person name="Renvoise E."/>
            <person name="Petitjean A."/>
            <person name="Quere J.-P."/>
        </authorList>
    </citation>
    <scope>NUCLEOTIDE SEQUENCE [GENOMIC DNA]</scope>
</reference>
<reference key="2">
    <citation type="journal article" date="1999" name="Ecotoxicology">
        <title>On the utility of heteroplasmy in genotoxicity studies: an example from Chernobyl.</title>
        <authorList>
            <person name="Baker R.J."/>
            <person name="DeWoody J.A."/>
            <person name="Wright A.J."/>
            <person name="Chesser R.K."/>
        </authorList>
    </citation>
    <scope>NUCLEOTIDE SEQUENCE [GENOMIC DNA] OF 2-134</scope>
    <source>
        <strain>Isolate TK 44605</strain>
        <strain>Isolate TK 44634</strain>
        <strain>Isolate TK 44635</strain>
        <strain>Isolate TK 44636</strain>
        <strain>Isolate TK 44637</strain>
        <strain>Isolate TK 44638</strain>
        <strain>Isolate TK 44916</strain>
        <strain>Isolate TK 44917</strain>
        <strain>Isolate TK 44918</strain>
        <strain>Isolate TK 44919</strain>
        <strain>Isolate TK 44920</strain>
        <strain>Isolate TK 44921</strain>
        <tissue>Liver</tissue>
    </source>
</reference>
<reference key="3">
    <citation type="journal article" date="1996" name="Nature">
        <title>High levels of genetic change in rodents of Chernobyl.</title>
        <authorList>
            <person name="Baker R.J."/>
            <person name="Van Den Bussche R.A."/>
            <person name="Wright A.J."/>
            <person name="Wiggins L.E."/>
            <person name="Hamilton M.J."/>
            <person name="Reat E.P."/>
            <person name="Smith M.H."/>
            <person name="Lomakin M.D."/>
            <person name="Chesser R.K."/>
        </authorList>
    </citation>
    <scope>RETRACTED PAPER</scope>
    <source>
        <strain>Isolate TK 44564</strain>
        <strain>Isolate TK 44566</strain>
        <strain>Isolate TK 44605</strain>
        <strain>Isolate TK 44624</strain>
        <strain>Isolate TK 44634</strain>
        <strain>Isolate TK 44635</strain>
        <strain>Isolate TK 44636</strain>
        <strain>Isolate TK 44637</strain>
        <strain>Isolate TK 44638</strain>
        <strain>Isolate TK 44739</strain>
        <strain>Isolate TK 44741</strain>
        <strain>Isolate TK 44751</strain>
        <strain>Isolate TK 44788</strain>
        <strain>Isolate TK 44790</strain>
        <strain>Isolate TK 44828</strain>
        <tissue>Liver</tissue>
    </source>
</reference>
<reference key="4">
    <citation type="journal article" date="1997" name="Nature">
        <authorList>
            <person name="Baker R.J."/>
            <person name="Van Den Bussche R.A."/>
            <person name="Wright A.J."/>
            <person name="Wiggins L.E."/>
            <person name="Hamilton M.J."/>
            <person name="Reat E.P."/>
            <person name="Smith M.H."/>
            <person name="Lomakin M.D."/>
            <person name="Chesser R.K."/>
        </authorList>
    </citation>
    <scope>RETRACTION NOTICE OF PUBMED:8614463</scope>
</reference>
<proteinExistence type="inferred from homology"/>
<geneLocation type="mitochondrion"/>
<protein>
    <recommendedName>
        <fullName>Cytochrome b</fullName>
    </recommendedName>
    <alternativeName>
        <fullName>Complex III subunit 3</fullName>
    </alternativeName>
    <alternativeName>
        <fullName>Complex III subunit III</fullName>
    </alternativeName>
    <alternativeName>
        <fullName>Cytochrome b-c1 complex subunit 3</fullName>
    </alternativeName>
    <alternativeName>
        <fullName>Ubiquinol-cytochrome-c reductase complex cytochrome b subunit</fullName>
    </alternativeName>
</protein>
<name>CYB_MICAR</name>
<sequence length="380" mass="42841">MTVIRKKHPLIKIINHSFIDLPAPSNISSWWNFGSLLGLCLIVQILTGLFLAMHYTSDTATAFSSVAHICRDVNYGWLIRYMHANGASMFFICLFLHVGRGVYYGSYNMIETWNMGIVLLFAVMATAFMGYVLPWGQMSFWGATVITNLLSAIPYIGTTLVEWIWGGFSVDKATLTRFFAFHFILPFIITALVLVHLLFLHETGSNNPTGLNSDADKIPFHPYYTVKDFLGVLILLMAFMILTLFFPDILGDPDNYTPANPLNTPPHIKPEWYFLFAYAILRSIPNKLGGVLALILSIVILAFMPLLHTSKQRALTFRPITQTMYWILVADLLVLTWIGGQPVEYPFIIIGQTASIAYFTIIVIFMPIAGMIENDIMDLD</sequence>